<evidence type="ECO:0000255" key="1"/>
<evidence type="ECO:0000269" key="2">
    <source>
    </source>
</evidence>
<evidence type="ECO:0000303" key="3">
    <source>
    </source>
</evidence>
<evidence type="ECO:0000305" key="4"/>
<evidence type="ECO:0000305" key="5">
    <source>
    </source>
</evidence>
<protein>
    <recommendedName>
        <fullName evidence="3">Secreted RxLR effector protein 5</fullName>
    </recommendedName>
</protein>
<accession>W2N2K3</accession>
<organism>
    <name type="scientific">Phytophthora nicotianae</name>
    <name type="common">Potato buckeye rot agent</name>
    <name type="synonym">Phytophthora parasitica</name>
    <dbReference type="NCBI Taxonomy" id="4792"/>
    <lineage>
        <taxon>Eukaryota</taxon>
        <taxon>Sar</taxon>
        <taxon>Stramenopiles</taxon>
        <taxon>Oomycota</taxon>
        <taxon>Peronosporales</taxon>
        <taxon>Peronosporaceae</taxon>
        <taxon>Phytophthora</taxon>
    </lineage>
</organism>
<comment type="function">
    <text evidence="2">Secreted effector that partially suppresses elicitor-induced cell death in host and enhances virulence of P.parasitica.</text>
</comment>
<comment type="subcellular location">
    <subcellularLocation>
        <location evidence="5">Secreted</location>
    </subcellularLocation>
    <subcellularLocation>
        <location evidence="5">Host cell</location>
    </subcellularLocation>
</comment>
<comment type="induction">
    <text evidence="2">Expression is induced in presence of citrus root extracts or during the interaction with the susceptible host.</text>
</comment>
<comment type="domain">
    <text evidence="5">The RxLR-dEER motif acts to carry the protein into the host cell cytoplasm through binding to cell surface phosphatidylinositol-3-phosphate.</text>
</comment>
<comment type="similarity">
    <text evidence="4">Belongs to the RxLR effector family.</text>
</comment>
<sequence length="180" mass="20601">MRFYYTLLATAAALLVHSDALSAAAETSLNQLTAVDGTTTTSQRFLRRHTDSETTDNEERLNSGPIVLDTAKKIDDLFEVEKLDKILDPKMADKFLDGKTFFGWLDKSALDEALNGNIAQKTKVFEHWREKRLRPKALTKVLTTDPAVRKKYKFVYEMYDSYIKYVARKKLSGLKRNRGD</sequence>
<proteinExistence type="evidence at transcript level"/>
<reference key="1">
    <citation type="submission" date="2013-11" db="EMBL/GenBank/DDBJ databases">
        <title>The genome sequence of Phytophthora parasitica IAC_01/95.</title>
        <authorList>
            <consortium name="The Broad Institute Genomics Platform"/>
            <person name="Russ C."/>
            <person name="Tyler B."/>
            <person name="Panabieres F."/>
            <person name="Shan W."/>
            <person name="Tripathy S."/>
            <person name="Grunwald N."/>
            <person name="Machado M."/>
            <person name="Johnson C.S."/>
            <person name="Arredondo F."/>
            <person name="Hong C."/>
            <person name="Coffey M."/>
            <person name="Young S.K."/>
            <person name="Zeng Q."/>
            <person name="Gargeya S."/>
            <person name="Fitzgerald M."/>
            <person name="Abouelleil A."/>
            <person name="Alvarado L."/>
            <person name="Chapman S.B."/>
            <person name="Gainer-Dewar J."/>
            <person name="Goldberg J."/>
            <person name="Griggs A."/>
            <person name="Gujja S."/>
            <person name="Hansen M."/>
            <person name="Howarth C."/>
            <person name="Imamovic A."/>
            <person name="Ireland A."/>
            <person name="Larimer J."/>
            <person name="McCowan C."/>
            <person name="Murphy C."/>
            <person name="Pearson M."/>
            <person name="Poon T.W."/>
            <person name="Priest M."/>
            <person name="Roberts A."/>
            <person name="Saif S."/>
            <person name="Shea T."/>
            <person name="Sykes S."/>
            <person name="Wortman J."/>
            <person name="Nusbaum C."/>
            <person name="Birren B."/>
        </authorList>
    </citation>
    <scope>NUCLEOTIDE SEQUENCE [LARGE SCALE GENOMIC DNA]</scope>
    <source>
        <strain>IAC_01/95</strain>
    </source>
</reference>
<reference key="2">
    <citation type="journal article" date="2018" name="Mol. Plant Microbe Interact.">
        <title>Phytophthora parasitica effector PpRxLR2 suppresses Nicotiana benthamiana immunity.</title>
        <authorList>
            <person name="Dalio R.J.D."/>
            <person name="Maximo H.J."/>
            <person name="Oliveira T.S."/>
            <person name="Dias R.O."/>
            <person name="Breton M.C."/>
            <person name="Felizatti H."/>
            <person name="Machado M."/>
        </authorList>
    </citation>
    <scope>INDUCTION</scope>
    <scope>FUNCTION</scope>
</reference>
<name>RXLR5_PHYNI</name>
<keyword id="KW-0964">Secreted</keyword>
<keyword id="KW-0732">Signal</keyword>
<keyword id="KW-0843">Virulence</keyword>
<dbReference type="EMBL" id="KI693697">
    <property type="protein sequence ID" value="ETM42907.1"/>
    <property type="molecule type" value="Genomic_DNA"/>
</dbReference>
<dbReference type="SMR" id="W2N2K3"/>
<dbReference type="EnsemblProtists" id="ETM42907">
    <property type="protein sequence ID" value="ETM42907"/>
    <property type="gene ID" value="L914_11512"/>
</dbReference>
<dbReference type="VEuPathDB" id="FungiDB:PPTG_12769"/>
<dbReference type="Proteomes" id="UP000054532">
    <property type="component" value="Unassembled WGS sequence"/>
</dbReference>
<dbReference type="GO" id="GO:0005576">
    <property type="term" value="C:extracellular region"/>
    <property type="evidence" value="ECO:0007669"/>
    <property type="project" value="UniProtKB-SubCell"/>
</dbReference>
<dbReference type="GO" id="GO:0043657">
    <property type="term" value="C:host cell"/>
    <property type="evidence" value="ECO:0007669"/>
    <property type="project" value="UniProtKB-SubCell"/>
</dbReference>
<dbReference type="InterPro" id="IPR031825">
    <property type="entry name" value="RXLR"/>
</dbReference>
<dbReference type="Pfam" id="PF16810">
    <property type="entry name" value="RXLR"/>
    <property type="match status" value="1"/>
</dbReference>
<feature type="signal peptide" evidence="1">
    <location>
        <begin position="1"/>
        <end position="24"/>
    </location>
</feature>
<feature type="chain" id="PRO_5004820376" description="Secreted RxLR effector protein 5">
    <location>
        <begin position="25"/>
        <end position="180"/>
    </location>
</feature>
<feature type="short sequence motif" description="RxLR-dEER" evidence="5">
    <location>
        <begin position="44"/>
        <end position="60"/>
    </location>
</feature>
<gene>
    <name evidence="3" type="primary">RxLR3</name>
    <name type="ORF">L914_11512</name>
</gene>